<protein>
    <recommendedName>
        <fullName>Histone H3.3</fullName>
    </recommendedName>
    <alternativeName>
        <fullName>Replacement histone H3</fullName>
    </alternativeName>
</protein>
<comment type="function">
    <text>Variant histone H3 which replaces conventional H3 in a wide range of nucleosomes in active genes. Constitutes the predominant form of histone H3 in non-dividing cells and is incorporated into chromatin independently of DNA synthesis. Deposited at sites of nucleosomal displacement throughout transcribed genes, suggesting that it represents an epigenetic imprint of transcriptionally active chromatin. Nucleosomes wrap and compact DNA into chromatin, limiting DNA accessibility to the cellular machineries which require DNA as a template. Histones thereby play a central role in transcription regulation, DNA repair, DNA replication and chromosomal stability. DNA accessibility is regulated via a complex set of post-translational modifications of histones, also called histone code, and nucleosome remodeling.</text>
</comment>
<comment type="subunit">
    <text>The nucleosome is a histone octamer containing two molecules each of H2A, H2B, H3 and H4 assembled in one H3-H4 heterotetramer and two H2A-H2B heterodimers. The octamer wraps approximately 147 bp of DNA.</text>
</comment>
<comment type="subcellular location">
    <subcellularLocation>
        <location evidence="1">Nucleus</location>
    </subcellularLocation>
    <subcellularLocation>
        <location evidence="1">Chromosome</location>
    </subcellularLocation>
</comment>
<comment type="tissue specificity">
    <text evidence="3">High expression in roots, intermediate in stems and peduncles, and low in spikelets and leaves.</text>
</comment>
<comment type="induction">
    <text evidence="3">Up-regulated in leaves by salt stress, heat or cold treatments and abscisic acid.</text>
</comment>
<comment type="PTM">
    <text evidence="1">Acetylation is generally linked to gene activation. Can be acetylated to form H3K9ac, H3K14ac, H3K18ac and H3K23ac. H3K9ac could compete with H3K9me and prevent gene silencing. H3K9ac is restricted to euchromatin (By similarity).</text>
</comment>
<comment type="PTM">
    <text evidence="1">Methylated to form mainly H3K4me, H3K9me, H3K18me, H3K23me, H3K27me and H3K36me. H3K4me1/2/3, H3K9me3, H3K27me3 and H3K36me1/2/3 are typical marks for euchromatin, whereas heterochromatic chromocenters are enriched in H3K9me1/2 and H3K27me1/2. H2BK143ub1 is probably prerequisite for H3K4me (By similarity).</text>
</comment>
<comment type="PTM">
    <text evidence="1">Can be phosphorylated to form H3S10ph, H3T11ph and H3S28ph.</text>
</comment>
<comment type="similarity">
    <text evidence="4">Belongs to the histone H3 family.</text>
</comment>
<comment type="caution">
    <text evidence="4">To ensure consistency between histone entries, we follow the 'Brno' nomenclature for histone modifications, with positions referring to those used in the literature for the 'closest' model organism. Due to slight variations in histone sequences between organisms and to the presence of initiator methionine in UniProtKB/Swiss-Prot sequences, the actual positions of modified amino acids in the sequence generally differ. In this entry the following conventions are used: H3K4me = methylated Lys-5; H3K9ac = acetylated Lys-10; H3K9me = methylated Lys-10; H3S10ph = phosphorylated Ser-11; H3T11ph = phosphorylated Thr-12; H3K14ac = acetylated Lys-15; H3K18ac = acetylated Lys-19; H3K18me = methylated Lys-19; H3K23ac = acetylated Lys-24; H3K23me = methylated Lys-24; H3K27me = methylated Lys-28; H3S28ph = phosphorylated Ser-29; H3K36me = methylated Lys-37.</text>
</comment>
<feature type="initiator methionine" description="Removed" evidence="1">
    <location>
        <position position="1"/>
    </location>
</feature>
<feature type="chain" id="PRO_0000263051" description="Histone H3.3">
    <location>
        <begin position="2"/>
        <end position="136"/>
    </location>
</feature>
<feature type="region of interest" description="Disordered" evidence="2">
    <location>
        <begin position="1"/>
        <end position="43"/>
    </location>
</feature>
<feature type="modified residue" description="N6-methylated lysine" evidence="1">
    <location>
        <position position="5"/>
    </location>
</feature>
<feature type="modified residue" description="N6-acetyllysine; alternate" evidence="1">
    <location>
        <position position="10"/>
    </location>
</feature>
<feature type="modified residue" description="N6-methylated lysine; alternate" evidence="1">
    <location>
        <position position="10"/>
    </location>
</feature>
<feature type="modified residue" description="Phosphoserine" evidence="1">
    <location>
        <position position="11"/>
    </location>
</feature>
<feature type="modified residue" description="Phosphothreonine" evidence="1">
    <location>
        <position position="12"/>
    </location>
</feature>
<feature type="modified residue" description="N6-acetyllysine" evidence="1">
    <location>
        <position position="15"/>
    </location>
</feature>
<feature type="modified residue" description="N6-acetyllysine; alternate" evidence="1">
    <location>
        <position position="19"/>
    </location>
</feature>
<feature type="modified residue" description="N6-methylated lysine; alternate" evidence="1">
    <location>
        <position position="19"/>
    </location>
</feature>
<feature type="modified residue" description="N6-acetyllysine; alternate" evidence="1">
    <location>
        <position position="24"/>
    </location>
</feature>
<feature type="modified residue" description="N6-methylated lysine; alternate" evidence="1">
    <location>
        <position position="24"/>
    </location>
</feature>
<feature type="modified residue" description="N6-methylated lysine" evidence="1">
    <location>
        <position position="28"/>
    </location>
</feature>
<feature type="modified residue" description="Phosphoserine" evidence="1">
    <location>
        <position position="29"/>
    </location>
</feature>
<feature type="modified residue" description="N6-methylated lysine" evidence="1">
    <location>
        <position position="37"/>
    </location>
</feature>
<evidence type="ECO:0000250" key="1"/>
<evidence type="ECO:0000256" key="2">
    <source>
        <dbReference type="SAM" id="MobiDB-lite"/>
    </source>
</evidence>
<evidence type="ECO:0000269" key="3">
    <source>
    </source>
</evidence>
<evidence type="ECO:0000305" key="4"/>
<name>H33_LOLMU</name>
<accession>Q3C2E5</accession>
<gene>
    <name type="primary">RH3</name>
</gene>
<keyword id="KW-0007">Acetylation</keyword>
<keyword id="KW-0158">Chromosome</keyword>
<keyword id="KW-0238">DNA-binding</keyword>
<keyword id="KW-0488">Methylation</keyword>
<keyword id="KW-0544">Nucleosome core</keyword>
<keyword id="KW-0539">Nucleus</keyword>
<keyword id="KW-0597">Phosphoprotein</keyword>
<organism>
    <name type="scientific">Lolium multiflorum</name>
    <name type="common">Italian ryegrass</name>
    <name type="synonym">Lolium perenne subsp. multiflorum</name>
    <dbReference type="NCBI Taxonomy" id="4521"/>
    <lineage>
        <taxon>Eukaryota</taxon>
        <taxon>Viridiplantae</taxon>
        <taxon>Streptophyta</taxon>
        <taxon>Embryophyta</taxon>
        <taxon>Tracheophyta</taxon>
        <taxon>Spermatophyta</taxon>
        <taxon>Magnoliopsida</taxon>
        <taxon>Liliopsida</taxon>
        <taxon>Poales</taxon>
        <taxon>Poaceae</taxon>
        <taxon>BOP clade</taxon>
        <taxon>Pooideae</taxon>
        <taxon>Poodae</taxon>
        <taxon>Poeae</taxon>
        <taxon>Poeae Chloroplast Group 2 (Poeae type)</taxon>
        <taxon>Loliodinae</taxon>
        <taxon>Loliinae</taxon>
        <taxon>Lolium</taxon>
    </lineage>
</organism>
<reference key="1">
    <citation type="journal article" date="2006" name="J. Plant Physiol.">
        <title>Molecular cloning and expression analysis of the replacement histone H3 gene of Italian ryegrass (Lolium multiflorum).</title>
        <authorList>
            <person name="Takahashi W."/>
            <person name="Oishi H."/>
            <person name="Ikeda S."/>
            <person name="Takamizo T."/>
            <person name="Komatsu T."/>
        </authorList>
    </citation>
    <scope>NUCLEOTIDE SEQUENCE [GENOMIC DNA]</scope>
    <scope>TISSUE SPECIFICITY</scope>
    <scope>INDUCTION</scope>
    <source>
        <strain>cv. Minamiaoba</strain>
    </source>
</reference>
<proteinExistence type="evidence at transcript level"/>
<dbReference type="EMBL" id="AB205017">
    <property type="protein sequence ID" value="BAE47073.1"/>
    <property type="molecule type" value="Genomic_DNA"/>
</dbReference>
<dbReference type="SMR" id="Q3C2E5"/>
<dbReference type="GO" id="GO:0000786">
    <property type="term" value="C:nucleosome"/>
    <property type="evidence" value="ECO:0007669"/>
    <property type="project" value="UniProtKB-KW"/>
</dbReference>
<dbReference type="GO" id="GO:0005634">
    <property type="term" value="C:nucleus"/>
    <property type="evidence" value="ECO:0007669"/>
    <property type="project" value="UniProtKB-SubCell"/>
</dbReference>
<dbReference type="GO" id="GO:0003677">
    <property type="term" value="F:DNA binding"/>
    <property type="evidence" value="ECO:0007669"/>
    <property type="project" value="UniProtKB-KW"/>
</dbReference>
<dbReference type="GO" id="GO:0046982">
    <property type="term" value="F:protein heterodimerization activity"/>
    <property type="evidence" value="ECO:0007669"/>
    <property type="project" value="InterPro"/>
</dbReference>
<dbReference type="GO" id="GO:0030527">
    <property type="term" value="F:structural constituent of chromatin"/>
    <property type="evidence" value="ECO:0007669"/>
    <property type="project" value="InterPro"/>
</dbReference>
<dbReference type="CDD" id="cd22911">
    <property type="entry name" value="HFD_H3"/>
    <property type="match status" value="1"/>
</dbReference>
<dbReference type="FunFam" id="1.10.20.10:FF:000078">
    <property type="entry name" value="Histone H3"/>
    <property type="match status" value="1"/>
</dbReference>
<dbReference type="FunFam" id="1.10.20.10:FF:000044">
    <property type="entry name" value="Histone H3.3"/>
    <property type="match status" value="1"/>
</dbReference>
<dbReference type="Gene3D" id="1.10.20.10">
    <property type="entry name" value="Histone, subunit A"/>
    <property type="match status" value="1"/>
</dbReference>
<dbReference type="InterPro" id="IPR009072">
    <property type="entry name" value="Histone-fold"/>
</dbReference>
<dbReference type="InterPro" id="IPR007125">
    <property type="entry name" value="Histone_H2A/H2B/H3"/>
</dbReference>
<dbReference type="InterPro" id="IPR000164">
    <property type="entry name" value="Histone_H3/CENP-A"/>
</dbReference>
<dbReference type="PANTHER" id="PTHR11426">
    <property type="entry name" value="HISTONE H3"/>
    <property type="match status" value="1"/>
</dbReference>
<dbReference type="Pfam" id="PF00125">
    <property type="entry name" value="Histone"/>
    <property type="match status" value="1"/>
</dbReference>
<dbReference type="PRINTS" id="PR00622">
    <property type="entry name" value="HISTONEH3"/>
</dbReference>
<dbReference type="SMART" id="SM00428">
    <property type="entry name" value="H3"/>
    <property type="match status" value="1"/>
</dbReference>
<dbReference type="SUPFAM" id="SSF47113">
    <property type="entry name" value="Histone-fold"/>
    <property type="match status" value="1"/>
</dbReference>
<dbReference type="PROSITE" id="PS00322">
    <property type="entry name" value="HISTONE_H3_1"/>
    <property type="match status" value="1"/>
</dbReference>
<dbReference type="PROSITE" id="PS00959">
    <property type="entry name" value="HISTONE_H3_2"/>
    <property type="match status" value="1"/>
</dbReference>
<sequence>MARTKQTARKSTGGKAPRKQLATKAARKSAPTTGGVKKPHRYRPGTVALREIRKYQKSTELLIRKLPFQRLVREIAQDFKTDLRFQSHAVLALQEAAEAYLVGLFEDTNLCAIHAKRVTIMPKDIQLARRIRGERA</sequence>